<accession>P0DG87</accession>
<accession>P67296</accession>
<accession>Q9A1B8</accession>
<evidence type="ECO:0000255" key="1">
    <source>
        <dbReference type="HAMAP-Rule" id="MF_00363"/>
    </source>
</evidence>
<dbReference type="EMBL" id="BA000034">
    <property type="protein sequence ID" value="BAC64693.1"/>
    <property type="molecule type" value="Genomic_DNA"/>
</dbReference>
<dbReference type="RefSeq" id="WP_002985908.1">
    <property type="nucleotide sequence ID" value="NC_004606.1"/>
</dbReference>
<dbReference type="SMR" id="P0DG87"/>
<dbReference type="KEGG" id="sps:SPs1598"/>
<dbReference type="HOGENOM" id="CLU_180108_0_0_9"/>
<dbReference type="GO" id="GO:0005886">
    <property type="term" value="C:plasma membrane"/>
    <property type="evidence" value="ECO:0007669"/>
    <property type="project" value="UniProtKB-UniRule"/>
</dbReference>
<dbReference type="HAMAP" id="MF_00363">
    <property type="entry name" value="UPF0154"/>
    <property type="match status" value="1"/>
</dbReference>
<dbReference type="InterPro" id="IPR005359">
    <property type="entry name" value="UPF0154"/>
</dbReference>
<dbReference type="Pfam" id="PF03672">
    <property type="entry name" value="UPF0154"/>
    <property type="match status" value="1"/>
</dbReference>
<sequence length="80" mass="8894">MSTAIWILLLIVALGVGVFGGIFIARKQIEKEIGEHPRLTPEAIREMMSQMGQKPSEAKIQQTYRNIIKQSKAAVSKGKK</sequence>
<reference key="1">
    <citation type="journal article" date="2003" name="Genome Res.">
        <title>Genome sequence of an M3 strain of Streptococcus pyogenes reveals a large-scale genomic rearrangement in invasive strains and new insights into phage evolution.</title>
        <authorList>
            <person name="Nakagawa I."/>
            <person name="Kurokawa K."/>
            <person name="Yamashita A."/>
            <person name="Nakata M."/>
            <person name="Tomiyasu Y."/>
            <person name="Okahashi N."/>
            <person name="Kawabata S."/>
            <person name="Yamazaki K."/>
            <person name="Shiba T."/>
            <person name="Yasunaga T."/>
            <person name="Hayashi H."/>
            <person name="Hattori M."/>
            <person name="Hamada S."/>
        </authorList>
    </citation>
    <scope>NUCLEOTIDE SEQUENCE [LARGE SCALE GENOMIC DNA]</scope>
    <source>
        <strain>SSI-1</strain>
    </source>
</reference>
<gene>
    <name type="ordered locus">SPs1598</name>
</gene>
<feature type="chain" id="PRO_0000411633" description="UPF0154 protein SPs1598">
    <location>
        <begin position="1"/>
        <end position="80"/>
    </location>
</feature>
<feature type="transmembrane region" description="Helical" evidence="1">
    <location>
        <begin position="4"/>
        <end position="24"/>
    </location>
</feature>
<proteinExistence type="inferred from homology"/>
<organism>
    <name type="scientific">Streptococcus pyogenes serotype M3 (strain SSI-1)</name>
    <dbReference type="NCBI Taxonomy" id="193567"/>
    <lineage>
        <taxon>Bacteria</taxon>
        <taxon>Bacillati</taxon>
        <taxon>Bacillota</taxon>
        <taxon>Bacilli</taxon>
        <taxon>Lactobacillales</taxon>
        <taxon>Streptococcaceae</taxon>
        <taxon>Streptococcus</taxon>
    </lineage>
</organism>
<protein>
    <recommendedName>
        <fullName evidence="1">UPF0154 protein SPs1598</fullName>
    </recommendedName>
</protein>
<comment type="subcellular location">
    <subcellularLocation>
        <location evidence="1">Membrane</location>
        <topology evidence="1">Single-pass membrane protein</topology>
    </subcellularLocation>
</comment>
<comment type="similarity">
    <text evidence="1">Belongs to the UPF0154 family.</text>
</comment>
<name>Y261_STRPQ</name>
<keyword id="KW-0472">Membrane</keyword>
<keyword id="KW-0812">Transmembrane</keyword>
<keyword id="KW-1133">Transmembrane helix</keyword>